<sequence length="115" mass="11326">MGRGRGVSSGGGQSSLGYLFGGGETAPAAKAKPAAAAEKETTPAPVKKAAVAAAASPSAAEKMKEIPAGIQSTQANNYFRAQGQNCGNFLTDRPSTKVHAAPGGGSSLGYLFGGK</sequence>
<dbReference type="EMBL" id="DP000010">
    <property type="protein sequence ID" value="ABA94943.1"/>
    <property type="molecule type" value="Genomic_DNA"/>
</dbReference>
<dbReference type="EMBL" id="AP008217">
    <property type="protein sequence ID" value="BAF28677.1"/>
    <property type="molecule type" value="Genomic_DNA"/>
</dbReference>
<dbReference type="EMBL" id="AP014967">
    <property type="protein sequence ID" value="BAT14932.1"/>
    <property type="molecule type" value="Genomic_DNA"/>
</dbReference>
<dbReference type="EMBL" id="CM000148">
    <property type="protein sequence ID" value="EAZ18984.1"/>
    <property type="molecule type" value="Genomic_DNA"/>
</dbReference>
<dbReference type="EMBL" id="AK099444">
    <property type="protein sequence ID" value="BAG94131.1"/>
    <property type="molecule type" value="mRNA"/>
</dbReference>
<dbReference type="RefSeq" id="XP_015617790.1">
    <property type="nucleotide sequence ID" value="XM_015762304.1"/>
</dbReference>
<dbReference type="FunCoup" id="Q2R0W8">
    <property type="interactions" value="177"/>
</dbReference>
<dbReference type="STRING" id="39947.Q2R0W8"/>
<dbReference type="PaxDb" id="39947-Q2R0W8"/>
<dbReference type="EnsemblPlants" id="Os11t0629400-01">
    <property type="protein sequence ID" value="Os11t0629400-01"/>
    <property type="gene ID" value="Os11g0629400"/>
</dbReference>
<dbReference type="Gramene" id="Os11t0629400-01">
    <property type="protein sequence ID" value="Os11t0629400-01"/>
    <property type="gene ID" value="Os11g0629400"/>
</dbReference>
<dbReference type="KEGG" id="dosa:Os11g0629400"/>
<dbReference type="eggNOG" id="ENOG502S4KK">
    <property type="taxonomic scope" value="Eukaryota"/>
</dbReference>
<dbReference type="HOGENOM" id="CLU_129558_0_0_1"/>
<dbReference type="InParanoid" id="Q2R0W8"/>
<dbReference type="OMA" id="PCNSEPI"/>
<dbReference type="OrthoDB" id="62622at2759"/>
<dbReference type="Proteomes" id="UP000000763">
    <property type="component" value="Chromosome 11"/>
</dbReference>
<dbReference type="Proteomes" id="UP000007752">
    <property type="component" value="Chromosome 11"/>
</dbReference>
<dbReference type="Proteomes" id="UP000059680">
    <property type="component" value="Chromosome 11"/>
</dbReference>
<dbReference type="GO" id="GO:0010005">
    <property type="term" value="C:cortical microtubule, transverse to long axis"/>
    <property type="evidence" value="ECO:0000318"/>
    <property type="project" value="GO_Central"/>
</dbReference>
<dbReference type="GO" id="GO:0043622">
    <property type="term" value="P:cortical microtubule organization"/>
    <property type="evidence" value="ECO:0000318"/>
    <property type="project" value="GO_Central"/>
</dbReference>
<dbReference type="InterPro" id="IPR039613">
    <property type="entry name" value="SPR1/2/3/4/5"/>
</dbReference>
<dbReference type="PANTHER" id="PTHR33403:SF31">
    <property type="entry name" value="PROTEIN SPIRAL1-LIKE 1"/>
    <property type="match status" value="1"/>
</dbReference>
<dbReference type="PANTHER" id="PTHR33403">
    <property type="entry name" value="SPR1"/>
    <property type="match status" value="1"/>
</dbReference>
<proteinExistence type="inferred from homology"/>
<feature type="chain" id="PRO_0000417965" description="Protein SPIRAL1-like 2">
    <location>
        <begin position="1"/>
        <end position="115"/>
    </location>
</feature>
<feature type="region of interest" description="Disordered" evidence="2">
    <location>
        <begin position="29"/>
        <end position="48"/>
    </location>
</feature>
<accession>Q2R0W8</accession>
<accession>A0A0P0Y4T6</accession>
<name>SP1L2_ORYSJ</name>
<protein>
    <recommendedName>
        <fullName>Protein SPIRAL1-like 2</fullName>
    </recommendedName>
</protein>
<comment type="function">
    <text evidence="1">Acts in maintaining the cortical microtubules organization essential for anisotropic cell growth.</text>
</comment>
<comment type="similarity">
    <text evidence="3">Belongs to the SPIRAL1 family.</text>
</comment>
<reference key="1">
    <citation type="journal article" date="2005" name="BMC Biol.">
        <title>The sequence of rice chromosomes 11 and 12, rich in disease resistance genes and recent gene duplications.</title>
        <authorList>
            <consortium name="The rice chromosomes 11 and 12 sequencing consortia"/>
        </authorList>
    </citation>
    <scope>NUCLEOTIDE SEQUENCE [LARGE SCALE GENOMIC DNA]</scope>
    <source>
        <strain>cv. Nipponbare</strain>
    </source>
</reference>
<reference key="2">
    <citation type="journal article" date="2005" name="Nature">
        <title>The map-based sequence of the rice genome.</title>
        <authorList>
            <consortium name="International rice genome sequencing project (IRGSP)"/>
        </authorList>
    </citation>
    <scope>NUCLEOTIDE SEQUENCE [LARGE SCALE GENOMIC DNA]</scope>
    <source>
        <strain>cv. Nipponbare</strain>
    </source>
</reference>
<reference key="3">
    <citation type="journal article" date="2008" name="Nucleic Acids Res.">
        <title>The rice annotation project database (RAP-DB): 2008 update.</title>
        <authorList>
            <consortium name="The rice annotation project (RAP)"/>
        </authorList>
    </citation>
    <scope>GENOME REANNOTATION</scope>
    <source>
        <strain>cv. Nipponbare</strain>
    </source>
</reference>
<reference key="4">
    <citation type="journal article" date="2013" name="Rice">
        <title>Improvement of the Oryza sativa Nipponbare reference genome using next generation sequence and optical map data.</title>
        <authorList>
            <person name="Kawahara Y."/>
            <person name="de la Bastide M."/>
            <person name="Hamilton J.P."/>
            <person name="Kanamori H."/>
            <person name="McCombie W.R."/>
            <person name="Ouyang S."/>
            <person name="Schwartz D.C."/>
            <person name="Tanaka T."/>
            <person name="Wu J."/>
            <person name="Zhou S."/>
            <person name="Childs K.L."/>
            <person name="Davidson R.M."/>
            <person name="Lin H."/>
            <person name="Quesada-Ocampo L."/>
            <person name="Vaillancourt B."/>
            <person name="Sakai H."/>
            <person name="Lee S.S."/>
            <person name="Kim J."/>
            <person name="Numa H."/>
            <person name="Itoh T."/>
            <person name="Buell C.R."/>
            <person name="Matsumoto T."/>
        </authorList>
    </citation>
    <scope>GENOME REANNOTATION</scope>
    <source>
        <strain>cv. Nipponbare</strain>
    </source>
</reference>
<reference key="5">
    <citation type="journal article" date="2005" name="PLoS Biol.">
        <title>The genomes of Oryza sativa: a history of duplications.</title>
        <authorList>
            <person name="Yu J."/>
            <person name="Wang J."/>
            <person name="Lin W."/>
            <person name="Li S."/>
            <person name="Li H."/>
            <person name="Zhou J."/>
            <person name="Ni P."/>
            <person name="Dong W."/>
            <person name="Hu S."/>
            <person name="Zeng C."/>
            <person name="Zhang J."/>
            <person name="Zhang Y."/>
            <person name="Li R."/>
            <person name="Xu Z."/>
            <person name="Li S."/>
            <person name="Li X."/>
            <person name="Zheng H."/>
            <person name="Cong L."/>
            <person name="Lin L."/>
            <person name="Yin J."/>
            <person name="Geng J."/>
            <person name="Li G."/>
            <person name="Shi J."/>
            <person name="Liu J."/>
            <person name="Lv H."/>
            <person name="Li J."/>
            <person name="Wang J."/>
            <person name="Deng Y."/>
            <person name="Ran L."/>
            <person name="Shi X."/>
            <person name="Wang X."/>
            <person name="Wu Q."/>
            <person name="Li C."/>
            <person name="Ren X."/>
            <person name="Wang J."/>
            <person name="Wang X."/>
            <person name="Li D."/>
            <person name="Liu D."/>
            <person name="Zhang X."/>
            <person name="Ji Z."/>
            <person name="Zhao W."/>
            <person name="Sun Y."/>
            <person name="Zhang Z."/>
            <person name="Bao J."/>
            <person name="Han Y."/>
            <person name="Dong L."/>
            <person name="Ji J."/>
            <person name="Chen P."/>
            <person name="Wu S."/>
            <person name="Liu J."/>
            <person name="Xiao Y."/>
            <person name="Bu D."/>
            <person name="Tan J."/>
            <person name="Yang L."/>
            <person name="Ye C."/>
            <person name="Zhang J."/>
            <person name="Xu J."/>
            <person name="Zhou Y."/>
            <person name="Yu Y."/>
            <person name="Zhang B."/>
            <person name="Zhuang S."/>
            <person name="Wei H."/>
            <person name="Liu B."/>
            <person name="Lei M."/>
            <person name="Yu H."/>
            <person name="Li Y."/>
            <person name="Xu H."/>
            <person name="Wei S."/>
            <person name="He X."/>
            <person name="Fang L."/>
            <person name="Zhang Z."/>
            <person name="Zhang Y."/>
            <person name="Huang X."/>
            <person name="Su Z."/>
            <person name="Tong W."/>
            <person name="Li J."/>
            <person name="Tong Z."/>
            <person name="Li S."/>
            <person name="Ye J."/>
            <person name="Wang L."/>
            <person name="Fang L."/>
            <person name="Lei T."/>
            <person name="Chen C.-S."/>
            <person name="Chen H.-C."/>
            <person name="Xu Z."/>
            <person name="Li H."/>
            <person name="Huang H."/>
            <person name="Zhang F."/>
            <person name="Xu H."/>
            <person name="Li N."/>
            <person name="Zhao C."/>
            <person name="Li S."/>
            <person name="Dong L."/>
            <person name="Huang Y."/>
            <person name="Li L."/>
            <person name="Xi Y."/>
            <person name="Qi Q."/>
            <person name="Li W."/>
            <person name="Zhang B."/>
            <person name="Hu W."/>
            <person name="Zhang Y."/>
            <person name="Tian X."/>
            <person name="Jiao Y."/>
            <person name="Liang X."/>
            <person name="Jin J."/>
            <person name="Gao L."/>
            <person name="Zheng W."/>
            <person name="Hao B."/>
            <person name="Liu S.-M."/>
            <person name="Wang W."/>
            <person name="Yuan L."/>
            <person name="Cao M."/>
            <person name="McDermott J."/>
            <person name="Samudrala R."/>
            <person name="Wang J."/>
            <person name="Wong G.K.-S."/>
            <person name="Yang H."/>
        </authorList>
    </citation>
    <scope>NUCLEOTIDE SEQUENCE [LARGE SCALE GENOMIC DNA]</scope>
    <source>
        <strain>cv. Nipponbare</strain>
    </source>
</reference>
<reference key="6">
    <citation type="journal article" date="2003" name="Science">
        <title>Collection, mapping, and annotation of over 28,000 cDNA clones from japonica rice.</title>
        <authorList>
            <consortium name="The rice full-length cDNA consortium"/>
        </authorList>
    </citation>
    <scope>NUCLEOTIDE SEQUENCE [LARGE SCALE MRNA]</scope>
    <source>
        <strain>cv. Nipponbare</strain>
    </source>
</reference>
<evidence type="ECO:0000250" key="1"/>
<evidence type="ECO:0000256" key="2">
    <source>
        <dbReference type="SAM" id="MobiDB-lite"/>
    </source>
</evidence>
<evidence type="ECO:0000305" key="3"/>
<gene>
    <name type="ordered locus">Os11g0629400</name>
    <name type="ordered locus">LOC_Os11g41150</name>
    <name type="ORF">OsJ_34517</name>
</gene>
<keyword id="KW-0493">Microtubule</keyword>
<keyword id="KW-1185">Reference proteome</keyword>
<organism>
    <name type="scientific">Oryza sativa subsp. japonica</name>
    <name type="common">Rice</name>
    <dbReference type="NCBI Taxonomy" id="39947"/>
    <lineage>
        <taxon>Eukaryota</taxon>
        <taxon>Viridiplantae</taxon>
        <taxon>Streptophyta</taxon>
        <taxon>Embryophyta</taxon>
        <taxon>Tracheophyta</taxon>
        <taxon>Spermatophyta</taxon>
        <taxon>Magnoliopsida</taxon>
        <taxon>Liliopsida</taxon>
        <taxon>Poales</taxon>
        <taxon>Poaceae</taxon>
        <taxon>BOP clade</taxon>
        <taxon>Oryzoideae</taxon>
        <taxon>Oryzeae</taxon>
        <taxon>Oryzinae</taxon>
        <taxon>Oryza</taxon>
        <taxon>Oryza sativa</taxon>
    </lineage>
</organism>